<feature type="chain" id="PRO_0000330109" description="Mitochondrial division protein 1">
    <location>
        <begin position="1"/>
        <end position="653"/>
    </location>
</feature>
<feature type="repeat" description="WD 1">
    <location>
        <begin position="313"/>
        <end position="354"/>
    </location>
</feature>
<feature type="repeat" description="WD 2">
    <location>
        <begin position="355"/>
        <end position="392"/>
    </location>
</feature>
<feature type="repeat" description="WD 3">
    <location>
        <begin position="431"/>
        <end position="470"/>
    </location>
</feature>
<feature type="repeat" description="WD 4">
    <location>
        <begin position="491"/>
        <end position="534"/>
    </location>
</feature>
<feature type="repeat" description="WD 5">
    <location>
        <begin position="537"/>
        <end position="576"/>
    </location>
</feature>
<feature type="repeat" description="WD 6">
    <location>
        <begin position="578"/>
        <end position="613"/>
    </location>
</feature>
<feature type="repeat" description="WD 7">
    <location>
        <begin position="618"/>
        <end position="653"/>
    </location>
</feature>
<feature type="region of interest" description="Disordered" evidence="3">
    <location>
        <begin position="246"/>
        <end position="265"/>
    </location>
</feature>
<feature type="coiled-coil region" evidence="2">
    <location>
        <begin position="207"/>
        <end position="251"/>
    </location>
</feature>
<feature type="compositionally biased region" description="Basic and acidic residues" evidence="3">
    <location>
        <begin position="254"/>
        <end position="264"/>
    </location>
</feature>
<reference key="1">
    <citation type="journal article" date="2003" name="Nature">
        <title>The genome sequence of the filamentous fungus Neurospora crassa.</title>
        <authorList>
            <person name="Galagan J.E."/>
            <person name="Calvo S.E."/>
            <person name="Borkovich K.A."/>
            <person name="Selker E.U."/>
            <person name="Read N.D."/>
            <person name="Jaffe D.B."/>
            <person name="FitzHugh W."/>
            <person name="Ma L.-J."/>
            <person name="Smirnov S."/>
            <person name="Purcell S."/>
            <person name="Rehman B."/>
            <person name="Elkins T."/>
            <person name="Engels R."/>
            <person name="Wang S."/>
            <person name="Nielsen C.B."/>
            <person name="Butler J."/>
            <person name="Endrizzi M."/>
            <person name="Qui D."/>
            <person name="Ianakiev P."/>
            <person name="Bell-Pedersen D."/>
            <person name="Nelson M.A."/>
            <person name="Werner-Washburne M."/>
            <person name="Selitrennikoff C.P."/>
            <person name="Kinsey J.A."/>
            <person name="Braun E.L."/>
            <person name="Zelter A."/>
            <person name="Schulte U."/>
            <person name="Kothe G.O."/>
            <person name="Jedd G."/>
            <person name="Mewes H.-W."/>
            <person name="Staben C."/>
            <person name="Marcotte E."/>
            <person name="Greenberg D."/>
            <person name="Roy A."/>
            <person name="Foley K."/>
            <person name="Naylor J."/>
            <person name="Stange-Thomann N."/>
            <person name="Barrett R."/>
            <person name="Gnerre S."/>
            <person name="Kamal M."/>
            <person name="Kamvysselis M."/>
            <person name="Mauceli E.W."/>
            <person name="Bielke C."/>
            <person name="Rudd S."/>
            <person name="Frishman D."/>
            <person name="Krystofova S."/>
            <person name="Rasmussen C."/>
            <person name="Metzenberg R.L."/>
            <person name="Perkins D.D."/>
            <person name="Kroken S."/>
            <person name="Cogoni C."/>
            <person name="Macino G."/>
            <person name="Catcheside D.E.A."/>
            <person name="Li W."/>
            <person name="Pratt R.J."/>
            <person name="Osmani S.A."/>
            <person name="DeSouza C.P.C."/>
            <person name="Glass N.L."/>
            <person name="Orbach M.J."/>
            <person name="Berglund J.A."/>
            <person name="Voelker R."/>
            <person name="Yarden O."/>
            <person name="Plamann M."/>
            <person name="Seiler S."/>
            <person name="Dunlap J.C."/>
            <person name="Radford A."/>
            <person name="Aramayo R."/>
            <person name="Natvig D.O."/>
            <person name="Alex L.A."/>
            <person name="Mannhaupt G."/>
            <person name="Ebbole D.J."/>
            <person name="Freitag M."/>
            <person name="Paulsen I."/>
            <person name="Sachs M.S."/>
            <person name="Lander E.S."/>
            <person name="Nusbaum C."/>
            <person name="Birren B.W."/>
        </authorList>
    </citation>
    <scope>NUCLEOTIDE SEQUENCE [LARGE SCALE GENOMIC DNA]</scope>
    <source>
        <strain>ATCC 24698 / 74-OR23-1A / CBS 708.71 / DSM 1257 / FGSC 987</strain>
    </source>
</reference>
<organism>
    <name type="scientific">Neurospora crassa (strain ATCC 24698 / 74-OR23-1A / CBS 708.71 / DSM 1257 / FGSC 987)</name>
    <dbReference type="NCBI Taxonomy" id="367110"/>
    <lineage>
        <taxon>Eukaryota</taxon>
        <taxon>Fungi</taxon>
        <taxon>Dikarya</taxon>
        <taxon>Ascomycota</taxon>
        <taxon>Pezizomycotina</taxon>
        <taxon>Sordariomycetes</taxon>
        <taxon>Sordariomycetidae</taxon>
        <taxon>Sordariales</taxon>
        <taxon>Sordariaceae</taxon>
        <taxon>Neurospora</taxon>
    </lineage>
</organism>
<evidence type="ECO:0000250" key="1"/>
<evidence type="ECO:0000255" key="2"/>
<evidence type="ECO:0000256" key="3">
    <source>
        <dbReference type="SAM" id="MobiDB-lite"/>
    </source>
</evidence>
<evidence type="ECO:0000305" key="4"/>
<gene>
    <name type="primary">mdv1</name>
    <name type="ORF">NCU07724</name>
</gene>
<protein>
    <recommendedName>
        <fullName>Mitochondrial division protein 1</fullName>
    </recommendedName>
</protein>
<comment type="function">
    <text evidence="1">Involved in mitochondrial fission. Acts as an adapter protein required to form mitochondrial fission complexes. Formation of these complexes is required to promote constriction and fission of the mitochondrial compartment at a late step in mitochondrial division (By similarity).</text>
</comment>
<comment type="subcellular location">
    <subcellularLocation>
        <location evidence="1">Mitochondrion outer membrane</location>
        <topology evidence="1">Peripheral membrane protein</topology>
        <orientation evidence="1">Cytoplasmic side</orientation>
    </subcellularLocation>
</comment>
<comment type="similarity">
    <text evidence="4">Belongs to the WD repeat MDV1/CAF4 family.</text>
</comment>
<sequence>MANSDQNRDVFPDDVSIDDDTSVISTRGLEAFGRKVTTTASHLIGPITDPTSHPHYQTAMTEIHKQLQKPTLQRGVFAIARTTPTDLVRSKLSSKEIQSRALAYVPDELLRNIPASSNSYSLFQGFQASFPDFTDDGKKHKRRVSRGRKMLDESPVQPGSPHAVQRLKKDKASMMHQLEMLGVRKNMASSEIREIDNKIANLHGMRKIILDRLANLEKEEAVLEHDIMDVESRLDEAQELADEAESLAMATPNKSEEDLSRTEEGFMSQSIYEKLPAANTPPGKKKPRNHRKKTLPILHEHFEPGTMIRSMRAHQDNITALDFDAPFGLMVSAAMDDSVRVWDLNAGRCIGTLEGHTASVRTLQIEDNFLATGSMDATIKLWDLSKAHYDPQGSQEVDEEDEDLAFVNPNDHAVDPPAGSMADCPLFTLEAHLDEITALHFRGDVLVSGSADKTLRQWDLTKGRCVQTLDVMWAAAQATAMGSSDGPWRQTSRSADGSADFVGALQVFESALACGTADGMVRLWDLRSGQVHRSLVGHTGPVTCLQFDDVHLVTGSLDRSIRIWDLRTGSIFDAYAYDHPITSMMFDTRRIVCAAGEDVVKVYDKVEGRHWDCGAGITEAEKAKSPAIVERVRIRDGYMVEGRQDGVVGVWTC</sequence>
<dbReference type="EMBL" id="CM002239">
    <property type="protein sequence ID" value="EAA32738.2"/>
    <property type="molecule type" value="Genomic_DNA"/>
</dbReference>
<dbReference type="RefSeq" id="XP_961974.2">
    <property type="nucleotide sequence ID" value="XM_956881.2"/>
</dbReference>
<dbReference type="SMR" id="Q7S8R5"/>
<dbReference type="FunCoup" id="Q7S8R5">
    <property type="interactions" value="35"/>
</dbReference>
<dbReference type="STRING" id="367110.Q7S8R5"/>
<dbReference type="PaxDb" id="5141-EFNCRP00000008036"/>
<dbReference type="EnsemblFungi" id="EAA32738">
    <property type="protein sequence ID" value="EAA32738"/>
    <property type="gene ID" value="NCU07724"/>
</dbReference>
<dbReference type="GeneID" id="3878122"/>
<dbReference type="KEGG" id="ncr:NCU07724"/>
<dbReference type="VEuPathDB" id="FungiDB:NCU07724"/>
<dbReference type="HOGENOM" id="CLU_012350_1_1_1"/>
<dbReference type="InParanoid" id="Q7S8R5"/>
<dbReference type="OrthoDB" id="496at2759"/>
<dbReference type="Proteomes" id="UP000001805">
    <property type="component" value="Chromosome 4, Linkage Group IV"/>
</dbReference>
<dbReference type="GO" id="GO:0005741">
    <property type="term" value="C:mitochondrial outer membrane"/>
    <property type="evidence" value="ECO:0007669"/>
    <property type="project" value="UniProtKB-SubCell"/>
</dbReference>
<dbReference type="GO" id="GO:0005739">
    <property type="term" value="C:mitochondrion"/>
    <property type="evidence" value="ECO:0000318"/>
    <property type="project" value="GO_Central"/>
</dbReference>
<dbReference type="GO" id="GO:1990234">
    <property type="term" value="C:transferase complex"/>
    <property type="evidence" value="ECO:0007669"/>
    <property type="project" value="UniProtKB-ARBA"/>
</dbReference>
<dbReference type="GO" id="GO:0000266">
    <property type="term" value="P:mitochondrial fission"/>
    <property type="evidence" value="ECO:0000318"/>
    <property type="project" value="GO_Central"/>
</dbReference>
<dbReference type="GO" id="GO:0016559">
    <property type="term" value="P:peroxisome fission"/>
    <property type="evidence" value="ECO:0000318"/>
    <property type="project" value="GO_Central"/>
</dbReference>
<dbReference type="CDD" id="cd22881">
    <property type="entry name" value="Mdv1_N"/>
    <property type="match status" value="1"/>
</dbReference>
<dbReference type="CDD" id="cd00200">
    <property type="entry name" value="WD40"/>
    <property type="match status" value="1"/>
</dbReference>
<dbReference type="FunFam" id="2.130.10.10:FF:000404">
    <property type="entry name" value="Mitochondrial division protein 1"/>
    <property type="match status" value="1"/>
</dbReference>
<dbReference type="FunFam" id="2.130.10.10:FF:000881">
    <property type="entry name" value="Mitochondrial division protein 1"/>
    <property type="match status" value="1"/>
</dbReference>
<dbReference type="Gene3D" id="6.10.280.220">
    <property type="match status" value="1"/>
</dbReference>
<dbReference type="Gene3D" id="2.130.10.10">
    <property type="entry name" value="YVTN repeat-like/Quinoprotein amine dehydrogenase"/>
    <property type="match status" value="2"/>
</dbReference>
<dbReference type="InterPro" id="IPR020472">
    <property type="entry name" value="G-protein_beta_WD-40_rep"/>
</dbReference>
<dbReference type="InterPro" id="IPR015943">
    <property type="entry name" value="WD40/YVTN_repeat-like_dom_sf"/>
</dbReference>
<dbReference type="InterPro" id="IPR019775">
    <property type="entry name" value="WD40_repeat_CS"/>
</dbReference>
<dbReference type="InterPro" id="IPR036322">
    <property type="entry name" value="WD40_repeat_dom_sf"/>
</dbReference>
<dbReference type="InterPro" id="IPR001680">
    <property type="entry name" value="WD40_rpt"/>
</dbReference>
<dbReference type="PANTHER" id="PTHR22847:SF637">
    <property type="entry name" value="WD REPEAT DOMAIN 5B"/>
    <property type="match status" value="1"/>
</dbReference>
<dbReference type="PANTHER" id="PTHR22847">
    <property type="entry name" value="WD40 REPEAT PROTEIN"/>
    <property type="match status" value="1"/>
</dbReference>
<dbReference type="Pfam" id="PF00400">
    <property type="entry name" value="WD40"/>
    <property type="match status" value="4"/>
</dbReference>
<dbReference type="PRINTS" id="PR00320">
    <property type="entry name" value="GPROTEINBRPT"/>
</dbReference>
<dbReference type="SMART" id="SM00320">
    <property type="entry name" value="WD40"/>
    <property type="match status" value="6"/>
</dbReference>
<dbReference type="SUPFAM" id="SSF50978">
    <property type="entry name" value="WD40 repeat-like"/>
    <property type="match status" value="1"/>
</dbReference>
<dbReference type="PROSITE" id="PS00678">
    <property type="entry name" value="WD_REPEATS_1"/>
    <property type="match status" value="3"/>
</dbReference>
<dbReference type="PROSITE" id="PS50082">
    <property type="entry name" value="WD_REPEATS_2"/>
    <property type="match status" value="5"/>
</dbReference>
<dbReference type="PROSITE" id="PS50294">
    <property type="entry name" value="WD_REPEATS_REGION"/>
    <property type="match status" value="1"/>
</dbReference>
<name>MDV1_NEUCR</name>
<proteinExistence type="inferred from homology"/>
<keyword id="KW-0175">Coiled coil</keyword>
<keyword id="KW-0472">Membrane</keyword>
<keyword id="KW-0496">Mitochondrion</keyword>
<keyword id="KW-1000">Mitochondrion outer membrane</keyword>
<keyword id="KW-1185">Reference proteome</keyword>
<keyword id="KW-0677">Repeat</keyword>
<keyword id="KW-0853">WD repeat</keyword>
<accession>Q7S8R5</accession>